<dbReference type="EMBL" id="CP000348">
    <property type="protein sequence ID" value="ABJ79502.1"/>
    <property type="molecule type" value="Genomic_DNA"/>
</dbReference>
<dbReference type="SMR" id="Q04ZJ3"/>
<dbReference type="KEGG" id="lbl:LBL_2089"/>
<dbReference type="HOGENOM" id="CLU_132594_0_0_12"/>
<dbReference type="GO" id="GO:0005829">
    <property type="term" value="C:cytosol"/>
    <property type="evidence" value="ECO:0007669"/>
    <property type="project" value="TreeGrafter"/>
</dbReference>
<dbReference type="GO" id="GO:0000028">
    <property type="term" value="P:ribosomal small subunit assembly"/>
    <property type="evidence" value="ECO:0007669"/>
    <property type="project" value="TreeGrafter"/>
</dbReference>
<dbReference type="GO" id="GO:0006412">
    <property type="term" value="P:translation"/>
    <property type="evidence" value="ECO:0007669"/>
    <property type="project" value="TreeGrafter"/>
</dbReference>
<dbReference type="Gene3D" id="3.30.300.70">
    <property type="entry name" value="RimP-like superfamily, N-terminal"/>
    <property type="match status" value="1"/>
</dbReference>
<dbReference type="HAMAP" id="MF_01077">
    <property type="entry name" value="RimP"/>
    <property type="match status" value="1"/>
</dbReference>
<dbReference type="InterPro" id="IPR003728">
    <property type="entry name" value="Ribosome_maturation_RimP"/>
</dbReference>
<dbReference type="InterPro" id="IPR028989">
    <property type="entry name" value="RimP_N"/>
</dbReference>
<dbReference type="InterPro" id="IPR035956">
    <property type="entry name" value="RimP_N_sf"/>
</dbReference>
<dbReference type="NCBIfam" id="NF011228">
    <property type="entry name" value="PRK14635.1"/>
    <property type="match status" value="1"/>
</dbReference>
<dbReference type="PANTHER" id="PTHR33867">
    <property type="entry name" value="RIBOSOME MATURATION FACTOR RIMP"/>
    <property type="match status" value="1"/>
</dbReference>
<dbReference type="PANTHER" id="PTHR33867:SF1">
    <property type="entry name" value="RIBOSOME MATURATION FACTOR RIMP"/>
    <property type="match status" value="1"/>
</dbReference>
<dbReference type="Pfam" id="PF02576">
    <property type="entry name" value="RimP_N"/>
    <property type="match status" value="1"/>
</dbReference>
<dbReference type="SUPFAM" id="SSF75420">
    <property type="entry name" value="YhbC-like, N-terminal domain"/>
    <property type="match status" value="1"/>
</dbReference>
<feature type="chain" id="PRO_1000064730" description="Ribosome maturation factor RimP">
    <location>
        <begin position="1"/>
        <end position="162"/>
    </location>
</feature>
<accession>Q04ZJ3</accession>
<keyword id="KW-0963">Cytoplasm</keyword>
<keyword id="KW-0690">Ribosome biogenesis</keyword>
<name>RIMP_LEPBL</name>
<reference key="1">
    <citation type="journal article" date="2006" name="Proc. Natl. Acad. Sci. U.S.A.">
        <title>Genome reduction in Leptospira borgpetersenii reflects limited transmission potential.</title>
        <authorList>
            <person name="Bulach D.M."/>
            <person name="Zuerner R.L."/>
            <person name="Wilson P."/>
            <person name="Seemann T."/>
            <person name="McGrath A."/>
            <person name="Cullen P.A."/>
            <person name="Davis J."/>
            <person name="Johnson M."/>
            <person name="Kuczek E."/>
            <person name="Alt D.P."/>
            <person name="Peterson-Burch B."/>
            <person name="Coppel R.L."/>
            <person name="Rood J.I."/>
            <person name="Davies J.K."/>
            <person name="Adler B."/>
        </authorList>
    </citation>
    <scope>NUCLEOTIDE SEQUENCE [LARGE SCALE GENOMIC DNA]</scope>
    <source>
        <strain>L550</strain>
    </source>
</reference>
<protein>
    <recommendedName>
        <fullName evidence="1">Ribosome maturation factor RimP</fullName>
    </recommendedName>
</protein>
<sequence>MTVSREEISTILDDALFLPVKLYSLKVNQRPNHSLIEVVLDNLEHPYGSVSLLECEQVSRKLKEELERISPDLDFTLKVSSAGAERKLHLPEDIDRFRGIPVRLVFRSGESEKNQEGIFRIVNRDGDQVFLEKFQKGKKSAVKKQTTLNLKDILKGNLYVSI</sequence>
<proteinExistence type="inferred from homology"/>
<gene>
    <name evidence="1" type="primary">rimP</name>
    <name type="ordered locus">LBL_2089</name>
</gene>
<evidence type="ECO:0000255" key="1">
    <source>
        <dbReference type="HAMAP-Rule" id="MF_01077"/>
    </source>
</evidence>
<organism>
    <name type="scientific">Leptospira borgpetersenii serovar Hardjo-bovis (strain L550)</name>
    <dbReference type="NCBI Taxonomy" id="355276"/>
    <lineage>
        <taxon>Bacteria</taxon>
        <taxon>Pseudomonadati</taxon>
        <taxon>Spirochaetota</taxon>
        <taxon>Spirochaetia</taxon>
        <taxon>Leptospirales</taxon>
        <taxon>Leptospiraceae</taxon>
        <taxon>Leptospira</taxon>
    </lineage>
</organism>
<comment type="function">
    <text evidence="1">Required for maturation of 30S ribosomal subunits.</text>
</comment>
<comment type="subcellular location">
    <subcellularLocation>
        <location evidence="1">Cytoplasm</location>
    </subcellularLocation>
</comment>
<comment type="similarity">
    <text evidence="1">Belongs to the RimP family.</text>
</comment>